<sequence>MIKIYAPASIGNVGVGFDILGIAIKPIDKTLLGDCISIKPSKKFQLKNHGNFSKQLPVNIKENIIWKAWKYFNKKAKKKKTVKIVLEKNMPIGSGLGSSASSIVACVIALNKFYKTKLSKTKLLKIMGKLEGIISGEVHYDNVAPCYLGGLQLITNDQKNITQKLPIFTDWLWVIAWPGVTLSTSQARNILPLKYKKKTCIHNSRNLATFIHALYTKQSELAIRYMKDIIAEPYRIPLIPKFLISKKKIIELGALTCNISGSGPTLFSVCPNISIAKKVKIWLKKNYMENQTGFVHICKIDQSGARKMEKKNEII</sequence>
<feature type="chain" id="PRO_1000049111" description="Homoserine kinase">
    <location>
        <begin position="1"/>
        <end position="315"/>
    </location>
</feature>
<feature type="binding site" evidence="1">
    <location>
        <begin position="91"/>
        <end position="101"/>
    </location>
    <ligand>
        <name>ATP</name>
        <dbReference type="ChEBI" id="CHEBI:30616"/>
    </ligand>
</feature>
<dbReference type="EC" id="2.7.1.39" evidence="1"/>
<dbReference type="EMBL" id="CP000263">
    <property type="protein sequence ID" value="ABJ90602.1"/>
    <property type="molecule type" value="Genomic_DNA"/>
</dbReference>
<dbReference type="RefSeq" id="WP_011672521.1">
    <property type="nucleotide sequence ID" value="NC_008513.1"/>
</dbReference>
<dbReference type="SMR" id="Q057U7"/>
<dbReference type="STRING" id="372461.BCc_126"/>
<dbReference type="KEGG" id="bcc:BCc_126"/>
<dbReference type="eggNOG" id="COG0083">
    <property type="taxonomic scope" value="Bacteria"/>
</dbReference>
<dbReference type="HOGENOM" id="CLU_041243_1_1_6"/>
<dbReference type="OrthoDB" id="9769912at2"/>
<dbReference type="UniPathway" id="UPA00050">
    <property type="reaction ID" value="UER00064"/>
</dbReference>
<dbReference type="Proteomes" id="UP000000669">
    <property type="component" value="Chromosome"/>
</dbReference>
<dbReference type="GO" id="GO:0005737">
    <property type="term" value="C:cytoplasm"/>
    <property type="evidence" value="ECO:0007669"/>
    <property type="project" value="UniProtKB-SubCell"/>
</dbReference>
<dbReference type="GO" id="GO:0005524">
    <property type="term" value="F:ATP binding"/>
    <property type="evidence" value="ECO:0007669"/>
    <property type="project" value="UniProtKB-UniRule"/>
</dbReference>
<dbReference type="GO" id="GO:0004413">
    <property type="term" value="F:homoserine kinase activity"/>
    <property type="evidence" value="ECO:0007669"/>
    <property type="project" value="UniProtKB-UniRule"/>
</dbReference>
<dbReference type="GO" id="GO:0009088">
    <property type="term" value="P:threonine biosynthetic process"/>
    <property type="evidence" value="ECO:0007669"/>
    <property type="project" value="UniProtKB-UniRule"/>
</dbReference>
<dbReference type="Gene3D" id="3.30.230.10">
    <property type="match status" value="1"/>
</dbReference>
<dbReference type="Gene3D" id="3.30.70.890">
    <property type="entry name" value="GHMP kinase, C-terminal domain"/>
    <property type="match status" value="1"/>
</dbReference>
<dbReference type="HAMAP" id="MF_00384">
    <property type="entry name" value="Homoser_kinase"/>
    <property type="match status" value="1"/>
</dbReference>
<dbReference type="InterPro" id="IPR013750">
    <property type="entry name" value="GHMP_kinase_C_dom"/>
</dbReference>
<dbReference type="InterPro" id="IPR036554">
    <property type="entry name" value="GHMP_kinase_C_sf"/>
</dbReference>
<dbReference type="InterPro" id="IPR006204">
    <property type="entry name" value="GHMP_kinase_N_dom"/>
</dbReference>
<dbReference type="InterPro" id="IPR006203">
    <property type="entry name" value="GHMP_knse_ATP-bd_CS"/>
</dbReference>
<dbReference type="InterPro" id="IPR000870">
    <property type="entry name" value="Homoserine_kinase"/>
</dbReference>
<dbReference type="InterPro" id="IPR020568">
    <property type="entry name" value="Ribosomal_Su5_D2-typ_SF"/>
</dbReference>
<dbReference type="InterPro" id="IPR014721">
    <property type="entry name" value="Ribsml_uS5_D2-typ_fold_subgr"/>
</dbReference>
<dbReference type="NCBIfam" id="NF002288">
    <property type="entry name" value="PRK01212.1-4"/>
    <property type="match status" value="1"/>
</dbReference>
<dbReference type="NCBIfam" id="TIGR00191">
    <property type="entry name" value="thrB"/>
    <property type="match status" value="1"/>
</dbReference>
<dbReference type="PANTHER" id="PTHR20861:SF1">
    <property type="entry name" value="HOMOSERINE KINASE"/>
    <property type="match status" value="1"/>
</dbReference>
<dbReference type="PANTHER" id="PTHR20861">
    <property type="entry name" value="HOMOSERINE/4-DIPHOSPHOCYTIDYL-2-C-METHYL-D-ERYTHRITOL KINASE"/>
    <property type="match status" value="1"/>
</dbReference>
<dbReference type="Pfam" id="PF08544">
    <property type="entry name" value="GHMP_kinases_C"/>
    <property type="match status" value="1"/>
</dbReference>
<dbReference type="Pfam" id="PF00288">
    <property type="entry name" value="GHMP_kinases_N"/>
    <property type="match status" value="1"/>
</dbReference>
<dbReference type="PIRSF" id="PIRSF000676">
    <property type="entry name" value="Homoser_kin"/>
    <property type="match status" value="1"/>
</dbReference>
<dbReference type="PRINTS" id="PR00958">
    <property type="entry name" value="HOMSERKINASE"/>
</dbReference>
<dbReference type="SUPFAM" id="SSF55060">
    <property type="entry name" value="GHMP Kinase, C-terminal domain"/>
    <property type="match status" value="1"/>
</dbReference>
<dbReference type="SUPFAM" id="SSF54211">
    <property type="entry name" value="Ribosomal protein S5 domain 2-like"/>
    <property type="match status" value="1"/>
</dbReference>
<dbReference type="PROSITE" id="PS00627">
    <property type="entry name" value="GHMP_KINASES_ATP"/>
    <property type="match status" value="1"/>
</dbReference>
<protein>
    <recommendedName>
        <fullName evidence="1">Homoserine kinase</fullName>
        <shortName evidence="1">HK</shortName>
        <shortName evidence="1">HSK</shortName>
        <ecNumber evidence="1">2.7.1.39</ecNumber>
    </recommendedName>
</protein>
<organism>
    <name type="scientific">Buchnera aphidicola subsp. Cinara cedri (strain Cc)</name>
    <dbReference type="NCBI Taxonomy" id="372461"/>
    <lineage>
        <taxon>Bacteria</taxon>
        <taxon>Pseudomonadati</taxon>
        <taxon>Pseudomonadota</taxon>
        <taxon>Gammaproteobacteria</taxon>
        <taxon>Enterobacterales</taxon>
        <taxon>Erwiniaceae</taxon>
        <taxon>Buchnera</taxon>
    </lineage>
</organism>
<gene>
    <name evidence="1" type="primary">thrB</name>
    <name type="ordered locus">BCc_126</name>
</gene>
<reference key="1">
    <citation type="journal article" date="2006" name="Science">
        <title>A small microbial genome: the end of a long symbiotic relationship?</title>
        <authorList>
            <person name="Perez-Brocal V."/>
            <person name="Gil R."/>
            <person name="Ramos S."/>
            <person name="Lamelas A."/>
            <person name="Postigo M."/>
            <person name="Michelena J.M."/>
            <person name="Silva F.J."/>
            <person name="Moya A."/>
            <person name="Latorre A."/>
        </authorList>
    </citation>
    <scope>NUCLEOTIDE SEQUENCE [LARGE SCALE GENOMIC DNA]</scope>
    <source>
        <strain>Cc</strain>
    </source>
</reference>
<keyword id="KW-0028">Amino-acid biosynthesis</keyword>
<keyword id="KW-0067">ATP-binding</keyword>
<keyword id="KW-0963">Cytoplasm</keyword>
<keyword id="KW-0418">Kinase</keyword>
<keyword id="KW-0547">Nucleotide-binding</keyword>
<keyword id="KW-1185">Reference proteome</keyword>
<keyword id="KW-0791">Threonine biosynthesis</keyword>
<keyword id="KW-0808">Transferase</keyword>
<proteinExistence type="inferred from homology"/>
<comment type="function">
    <text evidence="1">Catalyzes the ATP-dependent phosphorylation of L-homoserine to L-homoserine phosphate.</text>
</comment>
<comment type="catalytic activity">
    <reaction evidence="1">
        <text>L-homoserine + ATP = O-phospho-L-homoserine + ADP + H(+)</text>
        <dbReference type="Rhea" id="RHEA:13985"/>
        <dbReference type="ChEBI" id="CHEBI:15378"/>
        <dbReference type="ChEBI" id="CHEBI:30616"/>
        <dbReference type="ChEBI" id="CHEBI:57476"/>
        <dbReference type="ChEBI" id="CHEBI:57590"/>
        <dbReference type="ChEBI" id="CHEBI:456216"/>
        <dbReference type="EC" id="2.7.1.39"/>
    </reaction>
</comment>
<comment type="pathway">
    <text evidence="1">Amino-acid biosynthesis; L-threonine biosynthesis; L-threonine from L-aspartate: step 4/5.</text>
</comment>
<comment type="subcellular location">
    <subcellularLocation>
        <location evidence="1">Cytoplasm</location>
    </subcellularLocation>
</comment>
<comment type="similarity">
    <text evidence="1">Belongs to the GHMP kinase family. Homoserine kinase subfamily.</text>
</comment>
<name>KHSE_BUCCC</name>
<evidence type="ECO:0000255" key="1">
    <source>
        <dbReference type="HAMAP-Rule" id="MF_00384"/>
    </source>
</evidence>
<accession>Q057U7</accession>